<organism>
    <name type="scientific">Neisseria meningitidis serogroup A / serotype 4A (strain DSM 15465 / Z2491)</name>
    <dbReference type="NCBI Taxonomy" id="122587"/>
    <lineage>
        <taxon>Bacteria</taxon>
        <taxon>Pseudomonadati</taxon>
        <taxon>Pseudomonadota</taxon>
        <taxon>Betaproteobacteria</taxon>
        <taxon>Neisseriales</taxon>
        <taxon>Neisseriaceae</taxon>
        <taxon>Neisseria</taxon>
    </lineage>
</organism>
<evidence type="ECO:0000250" key="1"/>
<evidence type="ECO:0000256" key="2">
    <source>
        <dbReference type="SAM" id="MobiDB-lite"/>
    </source>
</evidence>
<evidence type="ECO:0000305" key="3"/>
<gene>
    <name type="primary">dnaK</name>
    <name type="ordered locus">NMA0736</name>
</gene>
<reference key="1">
    <citation type="journal article" date="2000" name="Nature">
        <title>Complete DNA sequence of a serogroup A strain of Neisseria meningitidis Z2491.</title>
        <authorList>
            <person name="Parkhill J."/>
            <person name="Achtman M."/>
            <person name="James K.D."/>
            <person name="Bentley S.D."/>
            <person name="Churcher C.M."/>
            <person name="Klee S.R."/>
            <person name="Morelli G."/>
            <person name="Basham D."/>
            <person name="Brown D."/>
            <person name="Chillingworth T."/>
            <person name="Davies R.M."/>
            <person name="Davis P."/>
            <person name="Devlin K."/>
            <person name="Feltwell T."/>
            <person name="Hamlin N."/>
            <person name="Holroyd S."/>
            <person name="Jagels K."/>
            <person name="Leather S."/>
            <person name="Moule S."/>
            <person name="Mungall K.L."/>
            <person name="Quail M.A."/>
            <person name="Rajandream M.A."/>
            <person name="Rutherford K.M."/>
            <person name="Simmonds M."/>
            <person name="Skelton J."/>
            <person name="Whitehead S."/>
            <person name="Spratt B.G."/>
            <person name="Barrell B.G."/>
        </authorList>
    </citation>
    <scope>NUCLEOTIDE SEQUENCE [LARGE SCALE GENOMIC DNA]</scope>
    <source>
        <strain>DSM 15465 / Z2491</strain>
    </source>
</reference>
<protein>
    <recommendedName>
        <fullName>Chaperone protein DnaK</fullName>
    </recommendedName>
    <alternativeName>
        <fullName>HSP70</fullName>
    </alternativeName>
    <alternativeName>
        <fullName>Heat shock 70 kDa protein</fullName>
    </alternativeName>
    <alternativeName>
        <fullName>Heat shock protein 70</fullName>
    </alternativeName>
</protein>
<dbReference type="EMBL" id="AL157959">
    <property type="protein sequence ID" value="CAM07988.1"/>
    <property type="molecule type" value="Genomic_DNA"/>
</dbReference>
<dbReference type="PIR" id="B81917">
    <property type="entry name" value="B81917"/>
</dbReference>
<dbReference type="RefSeq" id="WP_002247169.1">
    <property type="nucleotide sequence ID" value="NC_003116.1"/>
</dbReference>
<dbReference type="SMR" id="Q9JVQ9"/>
<dbReference type="EnsemblBacteria" id="CAM07988">
    <property type="protein sequence ID" value="CAM07988"/>
    <property type="gene ID" value="NMA0736"/>
</dbReference>
<dbReference type="KEGG" id="nma:NMA0736"/>
<dbReference type="HOGENOM" id="CLU_005965_2_1_4"/>
<dbReference type="Proteomes" id="UP000000626">
    <property type="component" value="Chromosome"/>
</dbReference>
<dbReference type="GO" id="GO:0005524">
    <property type="term" value="F:ATP binding"/>
    <property type="evidence" value="ECO:0007669"/>
    <property type="project" value="UniProtKB-UniRule"/>
</dbReference>
<dbReference type="GO" id="GO:0140662">
    <property type="term" value="F:ATP-dependent protein folding chaperone"/>
    <property type="evidence" value="ECO:0007669"/>
    <property type="project" value="InterPro"/>
</dbReference>
<dbReference type="GO" id="GO:0051082">
    <property type="term" value="F:unfolded protein binding"/>
    <property type="evidence" value="ECO:0007669"/>
    <property type="project" value="InterPro"/>
</dbReference>
<dbReference type="CDD" id="cd10234">
    <property type="entry name" value="ASKHA_NBD_HSP70_DnaK-like"/>
    <property type="match status" value="1"/>
</dbReference>
<dbReference type="FunFam" id="1.20.1270.10:FF:000034">
    <property type="entry name" value="Chaperone protein DnaK"/>
    <property type="match status" value="1"/>
</dbReference>
<dbReference type="FunFam" id="2.60.34.10:FF:000014">
    <property type="entry name" value="Chaperone protein DnaK HSP70"/>
    <property type="match status" value="1"/>
</dbReference>
<dbReference type="FunFam" id="3.30.30.30:FF:000003">
    <property type="entry name" value="Heat shock protein 9"/>
    <property type="match status" value="1"/>
</dbReference>
<dbReference type="FunFam" id="3.30.420.40:FF:000004">
    <property type="entry name" value="Molecular chaperone DnaK"/>
    <property type="match status" value="1"/>
</dbReference>
<dbReference type="FunFam" id="3.90.640.10:FF:000003">
    <property type="entry name" value="Molecular chaperone DnaK"/>
    <property type="match status" value="1"/>
</dbReference>
<dbReference type="Gene3D" id="1.20.1270.10">
    <property type="match status" value="1"/>
</dbReference>
<dbReference type="Gene3D" id="3.30.420.40">
    <property type="match status" value="2"/>
</dbReference>
<dbReference type="Gene3D" id="3.90.640.10">
    <property type="entry name" value="Actin, Chain A, domain 4"/>
    <property type="match status" value="1"/>
</dbReference>
<dbReference type="Gene3D" id="2.60.34.10">
    <property type="entry name" value="Substrate Binding Domain Of DNAk, Chain A, domain 1"/>
    <property type="match status" value="1"/>
</dbReference>
<dbReference type="HAMAP" id="MF_00332">
    <property type="entry name" value="DnaK"/>
    <property type="match status" value="1"/>
</dbReference>
<dbReference type="InterPro" id="IPR043129">
    <property type="entry name" value="ATPase_NBD"/>
</dbReference>
<dbReference type="InterPro" id="IPR012725">
    <property type="entry name" value="Chaperone_DnaK"/>
</dbReference>
<dbReference type="InterPro" id="IPR018181">
    <property type="entry name" value="Heat_shock_70_CS"/>
</dbReference>
<dbReference type="InterPro" id="IPR029048">
    <property type="entry name" value="HSP70_C_sf"/>
</dbReference>
<dbReference type="InterPro" id="IPR029047">
    <property type="entry name" value="HSP70_peptide-bd_sf"/>
</dbReference>
<dbReference type="InterPro" id="IPR013126">
    <property type="entry name" value="Hsp_70_fam"/>
</dbReference>
<dbReference type="NCBIfam" id="NF001413">
    <property type="entry name" value="PRK00290.1"/>
    <property type="match status" value="1"/>
</dbReference>
<dbReference type="NCBIfam" id="NF003520">
    <property type="entry name" value="PRK05183.1"/>
    <property type="match status" value="1"/>
</dbReference>
<dbReference type="NCBIfam" id="TIGR02350">
    <property type="entry name" value="prok_dnaK"/>
    <property type="match status" value="1"/>
</dbReference>
<dbReference type="PANTHER" id="PTHR19375">
    <property type="entry name" value="HEAT SHOCK PROTEIN 70KDA"/>
    <property type="match status" value="1"/>
</dbReference>
<dbReference type="Pfam" id="PF00012">
    <property type="entry name" value="HSP70"/>
    <property type="match status" value="1"/>
</dbReference>
<dbReference type="PRINTS" id="PR00301">
    <property type="entry name" value="HEATSHOCK70"/>
</dbReference>
<dbReference type="SUPFAM" id="SSF53067">
    <property type="entry name" value="Actin-like ATPase domain"/>
    <property type="match status" value="2"/>
</dbReference>
<dbReference type="SUPFAM" id="SSF100934">
    <property type="entry name" value="Heat shock protein 70kD (HSP70), C-terminal subdomain"/>
    <property type="match status" value="1"/>
</dbReference>
<dbReference type="SUPFAM" id="SSF100920">
    <property type="entry name" value="Heat shock protein 70kD (HSP70), peptide-binding domain"/>
    <property type="match status" value="1"/>
</dbReference>
<dbReference type="PROSITE" id="PS00297">
    <property type="entry name" value="HSP70_1"/>
    <property type="match status" value="1"/>
</dbReference>
<dbReference type="PROSITE" id="PS00329">
    <property type="entry name" value="HSP70_2"/>
    <property type="match status" value="1"/>
</dbReference>
<dbReference type="PROSITE" id="PS01036">
    <property type="entry name" value="HSP70_3"/>
    <property type="match status" value="1"/>
</dbReference>
<accession>Q9JVQ9</accession>
<accession>A1IQF7</accession>
<keyword id="KW-0067">ATP-binding</keyword>
<keyword id="KW-0143">Chaperone</keyword>
<keyword id="KW-0547">Nucleotide-binding</keyword>
<keyword id="KW-0597">Phosphoprotein</keyword>
<keyword id="KW-0346">Stress response</keyword>
<proteinExistence type="inferred from homology"/>
<feature type="chain" id="PRO_0000078502" description="Chaperone protein DnaK">
    <location>
        <begin position="1"/>
        <end position="642"/>
    </location>
</feature>
<feature type="region of interest" description="Disordered" evidence="2">
    <location>
        <begin position="608"/>
        <end position="642"/>
    </location>
</feature>
<feature type="compositionally biased region" description="Low complexity" evidence="2">
    <location>
        <begin position="608"/>
        <end position="621"/>
    </location>
</feature>
<feature type="compositionally biased region" description="Acidic residues" evidence="2">
    <location>
        <begin position="628"/>
        <end position="642"/>
    </location>
</feature>
<feature type="modified residue" description="Phosphothreonine; by autocatalysis" evidence="1">
    <location>
        <position position="200"/>
    </location>
</feature>
<name>DNAK_NEIMA</name>
<comment type="function">
    <text evidence="1">Acts as a chaperone.</text>
</comment>
<comment type="induction">
    <text evidence="1">By stress conditions e.g. heat shock (By similarity).</text>
</comment>
<comment type="similarity">
    <text evidence="3">Belongs to the heat shock protein 70 family.</text>
</comment>
<sequence length="642" mass="68907">MAKVIGIDLGTTNSCLAISENGQTKVIENAEGARTTPSVIAYLDGGEILVGAPAKRQAVTNAKNTIYAAKRLIGHKFEDKEVQRDIESMPFEIIKANNGDAWVKAQGKELSPPQISAEVLRKMKEAAEAYLGEKVTEAVITVPAYFNDSQRQATKDAGRIAGLDVKRIINEPTAAALAFGMDKGDNKDRKVAVYDLGGGTFDISIIEIANLDGDKQFEVLATNGDTFLGGEDFDQRLIDYIIDEFKKEQGIDLKQDVMALQRLKEAAEKAKIELSSGQQTEINLPYITMDATGPKHLAMKITRAKFESLVEDLIARSIEPCRTALKDAGLSTGDIDDVILVGGQSRMPKVQEAVRDFFGKEPRKDVNPDEAVAVGAAIQGEVLSGGRSDVLLLDVTPLSLGIETMGGVMTKLIQKNTTIPTKASQVFSTAEDNQSAVTIHVLQGERERASANKSLGQFNLGDIAPAPRGMPQIEVTFDIDANGILHVSAKDKGTGKAANITIQGSSGLSEEEIERMVKDAEANAEEDKKLTELVASRNQAEALIHSVKKSLADYGDKLDAAEKEKIEAALKEAEEAVKGDDKTAIDAKAEALGTASQKLGEMVYAQAQAEAQAGEGAQAESSAKKDDDIVDADFEEVKDDKK</sequence>